<organism>
    <name type="scientific">Lobularia maritima</name>
    <name type="common">Sweet alyssum</name>
    <name type="synonym">Alyssum maritimum</name>
    <dbReference type="NCBI Taxonomy" id="226051"/>
    <lineage>
        <taxon>Eukaryota</taxon>
        <taxon>Viridiplantae</taxon>
        <taxon>Streptophyta</taxon>
        <taxon>Embryophyta</taxon>
        <taxon>Tracheophyta</taxon>
        <taxon>Spermatophyta</taxon>
        <taxon>Magnoliopsida</taxon>
        <taxon>eudicotyledons</taxon>
        <taxon>Gunneridae</taxon>
        <taxon>Pentapetalae</taxon>
        <taxon>rosids</taxon>
        <taxon>malvids</taxon>
        <taxon>Brassicales</taxon>
        <taxon>Brassicaceae</taxon>
        <taxon>Anastaticeae</taxon>
        <taxon>Lobularia</taxon>
    </lineage>
</organism>
<name>YCF2_LOBMA</name>
<reference key="1">
    <citation type="submission" date="2007-03" db="EMBL/GenBank/DDBJ databases">
        <title>Sequencing analysis of Lobularia maritima chloroplast DNA.</title>
        <authorList>
            <person name="Hosouchi T."/>
            <person name="Tsuruoka H."/>
            <person name="Kotani H."/>
        </authorList>
    </citation>
    <scope>NUCLEOTIDE SEQUENCE [LARGE SCALE GENOMIC DNA]</scope>
</reference>
<protein>
    <recommendedName>
        <fullName evidence="1">Protein Ycf2</fullName>
    </recommendedName>
</protein>
<evidence type="ECO:0000255" key="1">
    <source>
        <dbReference type="HAMAP-Rule" id="MF_01330"/>
    </source>
</evidence>
<feature type="chain" id="PRO_0000343778" description="Protein Ycf2">
    <location>
        <begin position="1"/>
        <end position="2293"/>
    </location>
</feature>
<feature type="binding site" evidence="1">
    <location>
        <begin position="1647"/>
        <end position="1654"/>
    </location>
    <ligand>
        <name>ATP</name>
        <dbReference type="ChEBI" id="CHEBI:30616"/>
    </ligand>
</feature>
<geneLocation type="chloroplast"/>
<keyword id="KW-0067">ATP-binding</keyword>
<keyword id="KW-0150">Chloroplast</keyword>
<keyword id="KW-0547">Nucleotide-binding</keyword>
<keyword id="KW-0934">Plastid</keyword>
<gene>
    <name evidence="1" type="primary">ycf2-A</name>
</gene>
<gene>
    <name evidence="1" type="primary">ycf2-B</name>
</gene>
<dbReference type="EMBL" id="AP009375">
    <property type="protein sequence ID" value="BAF50592.1"/>
    <property type="molecule type" value="Genomic_DNA"/>
</dbReference>
<dbReference type="EMBL" id="AP009375">
    <property type="protein sequence ID" value="BAF50615.1"/>
    <property type="molecule type" value="Genomic_DNA"/>
</dbReference>
<dbReference type="GO" id="GO:0009570">
    <property type="term" value="C:chloroplast stroma"/>
    <property type="evidence" value="ECO:0007669"/>
    <property type="project" value="UniProtKB-SubCell"/>
</dbReference>
<dbReference type="GO" id="GO:0005524">
    <property type="term" value="F:ATP binding"/>
    <property type="evidence" value="ECO:0007669"/>
    <property type="project" value="UniProtKB-KW"/>
</dbReference>
<dbReference type="GO" id="GO:0016887">
    <property type="term" value="F:ATP hydrolysis activity"/>
    <property type="evidence" value="ECO:0007669"/>
    <property type="project" value="InterPro"/>
</dbReference>
<dbReference type="CDD" id="cd19505">
    <property type="entry name" value="RecA-like_Ycf2"/>
    <property type="match status" value="1"/>
</dbReference>
<dbReference type="Gene3D" id="3.40.50.300">
    <property type="entry name" value="P-loop containing nucleotide triphosphate hydrolases"/>
    <property type="match status" value="1"/>
</dbReference>
<dbReference type="HAMAP" id="MF_01330">
    <property type="entry name" value="Ycf2"/>
    <property type="match status" value="1"/>
</dbReference>
<dbReference type="InterPro" id="IPR003593">
    <property type="entry name" value="AAA+_ATPase"/>
</dbReference>
<dbReference type="InterPro" id="IPR003959">
    <property type="entry name" value="ATPase_AAA_core"/>
</dbReference>
<dbReference type="InterPro" id="IPR027417">
    <property type="entry name" value="P-loop_NTPase"/>
</dbReference>
<dbReference type="InterPro" id="IPR008543">
    <property type="entry name" value="Uncharacterised_Ycf2"/>
</dbReference>
<dbReference type="InterPro" id="IPR056777">
    <property type="entry name" value="Ycf2_N"/>
</dbReference>
<dbReference type="PANTHER" id="PTHR33078:SF89">
    <property type="entry name" value="PROTEIN YCF2"/>
    <property type="match status" value="1"/>
</dbReference>
<dbReference type="PANTHER" id="PTHR33078">
    <property type="entry name" value="PROTEIN YCF2-RELATED"/>
    <property type="match status" value="1"/>
</dbReference>
<dbReference type="Pfam" id="PF00004">
    <property type="entry name" value="AAA"/>
    <property type="match status" value="1"/>
</dbReference>
<dbReference type="Pfam" id="PF05695">
    <property type="entry name" value="Ycf2"/>
    <property type="match status" value="1"/>
</dbReference>
<dbReference type="SMART" id="SM00382">
    <property type="entry name" value="AAA"/>
    <property type="match status" value="1"/>
</dbReference>
<dbReference type="SUPFAM" id="SSF52540">
    <property type="entry name" value="P-loop containing nucleoside triphosphate hydrolases"/>
    <property type="match status" value="1"/>
</dbReference>
<comment type="function">
    <text evidence="1">Probable ATPase of unknown function. Its presence in a non-photosynthetic plant (Epifagus virginiana) and experiments in tobacco indicate that it has an essential function which is probably not related to photosynthesis.</text>
</comment>
<comment type="subcellular location">
    <subcellularLocation>
        <location evidence="1">Plastid</location>
        <location evidence="1">Chloroplast stroma</location>
    </subcellularLocation>
</comment>
<comment type="similarity">
    <text evidence="1">Belongs to the Ycf2 family.</text>
</comment>
<proteinExistence type="inferred from homology"/>
<sequence length="2293" mass="269416">MKGHQFKSWIFELREIVREIKNSHYFLDSWTQFNSVGSFIHIFFHQERFRKLLDPRIFSILLLRNSQGSTSNRYFTIKGVVLFVVAALLYRINNRNMVESKNLYLKGLLPIPMNSIGPRNDTSEESFGSSNINRLIVSLLYLTKGKKISESCFRDPKESTWVLPITQKFIMPESNWSSRWWRNWIGKKRDFCCKISNETVAGIYISFKEKDFKYLEFLFVYYMDDPIRKGHDWELFDRLSPSKRRNIINLNSGQLFEILVKDWICYLMFAFREKIPIEVEGFFKQQGAGSTIQSNDIEPVSHLFSRNKWAISLQNCAQFHMWQFHQDLFVSWGKNPHESDFLRKISRENWIWLDNVWLVNKDRFFSKVRNVSSNIQYDSTRSSFVQVTDSSQLNGSSDQFIDPFDSISNEDSEYHTLINQREIQQLKERSILLDPSFIQTEGREIESDRFPKYLSGYSSMPRLFTEREKRMNNHLLPEESEEFLGNPTRAIRSFFSDRWSELHLGSNPTERSTRDQKLLKKEQDVSFVPSRRSENKEIVNIFKIITYLQNTVSIHPISSDLGCDMVPKDELDMDSSNKISFLNKNPFFDLFHLFHERKRGGYTLRHDFESEERFQEMADLFTLSITEPDLVYHKGFAFSIDSYGLDQRQFLKEVFNSRDESKKKSLLVLPPIFYEENESFYRRIRKNWVRISCGNYLEDPKPKRVVFASNNIMEAVNQYRLIRNLIQIQFQYSPYGYIRNVLNRFFLMKRPDRNFEYGIQRDLIGNDTLNHRTIMKDTINQHLSNLKKSQKKRFDPLIFLSRTERSINRDPNAYRYKWSNGSKNFQEHLEHFVSERKSRFQVVFDRLCINQYSIDWSEVIDKKDLSKSLRFFLSKLLRFFLSKLLLFLSKLLLFLSNSLPFFFVSFENIPIHRSEIHIYELKGPNDQLCNQLLESIGLRIVHLKKLKPFLLDDHNTSQESEFLINGGTISPFLFNKIPKWMIDSFHTRKNRRKSFDNTDSYFSIVSHDQDNWLNPVKPFQRSSLISSFSKANRLRFLNNPHHFCFYCNKRFPFYVEKARLNNSDFTYGQFLTILFIHNKIFSSCGGKKKHAFLERDTISPSSIESQVSNIFISNDFPQSGDERYNLYKSFHFPIRSDPLVRRAIYSIADISGTPLIEGQRVNFERTYCQTLSDMNLSDSEEKSLHQYLNFNSNMGLIHTPCSEKYLQRKKRSLCLKKCVDKGQMDRTFQRDSAFSTLSKWNLFQTYMPWFFTSTGYKYLNLIFLDTFSDLLRILSSSQKFVSIFHDIMHGLDISWRILQKKLCLPQRNLISEISSKSLHNLLLSEEMIHPNNESSLISTHLRSPNVREVLYSILFLLLVAGYIVRTHLLFVSRAYSELQTEFEKIKSLMIPSYMIELRKLLDRYPTSELNSFWLKNLFLVALEQLGDCLEEIRGSGGNMLWGGDPAYGVKSIRSKKKDLKINFIDIIDLISIIPNPINRITFSRNTRHLSHTSKDIYSLIRKRKNVSGDWIDDKIESWVANSDSIDDKEREFLVQFSTLRAEKRIDQILLSLTHSDHLSKNDSGYQMIEQPGTIYLRYLVDIHKKSLMNYEFNTSCLAERRIFLAHYQTITYSQTSRGANSFHFPSHGKPFSLRLALSPSRSILVIGSIGTGRSYLVKYLATNSYVPFITVFLNKFLDNKPKGFFIDDIDIDDSDDIDASNDIDRELDTELELLTMMNALTMDMMSEIDRFYITLQFELAKAMSPCIIWIPNIHDLDVNESNYLALGLLVNSLSRDCERCSTRNILVIASTHIPQKVDPALIAPNKLNTCIKIRRLLIPQQRKHFFTLSYTRGFHLEKKMFHTNGFESITMGSSARDLVALTNEALSISITQKKSIIDTNTIRSALHRQTWDLRSQVRSVQDHGILFYQIGRAVAQNVLISNCPIDPISIYMKKKSCNEGDSYLYKWYFELGTSMKKFTILLYLLSCSAGLVAQDLWSLPGPDEKNRITSYGFIENDSDLVHGLLEVQGALVGSSRTEKDCSQFDNDRVTLLFRSEPRDPLYMMQDGSCSIVDQRFLYEKYESEFEEGEGEGVLDPQQIEEDLFNHIVWAPRIWRPRGFLFDCIERPNELGFPYLAGSFRGKQIIYDEKYELQENDSEFLQSGTMQYQRRDRSSKEQGFFRISQFIWDPADPLFFLFKDQPFVSVFSHREFFADEEMSKGLLTSQTDPPTSIYKRWFIKNTQEKHFELLIQRQRWLRTNSSLSNGFFRSNTLSESYQYLSNLFLSNGTLLDRMTKTLLKKRWLFPDEMKIGFM</sequence>
<accession>A4QLN7</accession>